<protein>
    <recommendedName>
        <fullName evidence="5">Stimulator of interferon genes protein 7</fullName>
        <shortName evidence="4">Sp-STING7</shortName>
    </recommendedName>
</protein>
<feature type="chain" id="PRO_0000460011" description="Stimulator of interferon genes protein 7">
    <location>
        <begin position="1"/>
        <end position="377"/>
    </location>
</feature>
<feature type="transmembrane region" description="Helical" evidence="2">
    <location>
        <begin position="30"/>
        <end position="50"/>
    </location>
</feature>
<feature type="transmembrane region" description="Helical" evidence="2">
    <location>
        <begin position="57"/>
        <end position="77"/>
    </location>
</feature>
<feature type="transmembrane region" description="Helical" evidence="2">
    <location>
        <begin position="106"/>
        <end position="126"/>
    </location>
</feature>
<feature type="transmembrane region" description="Helical" evidence="2">
    <location>
        <begin position="141"/>
        <end position="161"/>
    </location>
</feature>
<proteinExistence type="inferred from homology"/>
<sequence>MAENLLPRGDDLAQQENNGFGPLFKRRGRTAAITSAIIGVSSGAMLFLAVKEEEKKTHFLVFTAALLTLSFAFGELLRRLSLVSEEIQHKHTRHQGKWKSVFKTTFTFDHGGCISLTAMFSALILCYQLYEQYEVFSRSDFAILFSVNCLVVPQLLFLVGLRQLSPVETSDLNEKENKNVADGLAWSYYFGYLKLVLPHLKDQIAKSEQFRYKIKKKKLFILLPKTCFTHADIVDADPRVKWAGNLPELKISRGGIKDRIYKHAVHKIEMPRPDGTMDEYHFILEYATSLMTLYDMSQHADAPLSRKERDHQVVLFIRKLREILDKSEECRGSYELVPISGNDPNEIANVLVGMHNAANIEVLAGNHDQANGVIRPE</sequence>
<reference key="1">
    <citation type="journal article" date="2017" name="Sci. Rep.">
        <title>Comparative analysis of the genomes of Stylophora pistillata and Acropora digitifera provides evidence for extensive differences between species of corals.</title>
        <authorList>
            <person name="Voolstra C.R."/>
            <person name="Li Y."/>
            <person name="Liew Y.J."/>
            <person name="Baumgarten S."/>
            <person name="Zoccola D."/>
            <person name="Flot J.F."/>
            <person name="Tambutte S."/>
            <person name="Allemand D."/>
            <person name="Aranda M."/>
        </authorList>
    </citation>
    <scope>NUCLEOTIDE SEQUENCE [LARGE SCALE GENOMIC DNA]</scope>
</reference>
<reference key="2">
    <citation type="journal article" date="2023" name="Cell">
        <title>cGLRs are a diverse family of pattern recognition receptors in innate immunity.</title>
        <authorList>
            <person name="Li Y."/>
            <person name="Slavik K.M."/>
            <person name="Toyoda H.C."/>
            <person name="Morehouse B.R."/>
            <person name="de Oliveira Mann C.C."/>
            <person name="Elek A."/>
            <person name="Levy S."/>
            <person name="Wang Z."/>
            <person name="Mears K.S."/>
            <person name="Liu J."/>
            <person name="Kashin D."/>
            <person name="Guo X."/>
            <person name="Mass T."/>
            <person name="Sebe-Pedros A."/>
            <person name="Schwede F."/>
            <person name="Kranzusch P.J."/>
        </authorList>
    </citation>
    <scope>FUNCTION</scope>
</reference>
<keyword id="KW-0391">Immunity</keyword>
<keyword id="KW-0399">Innate immunity</keyword>
<keyword id="KW-0472">Membrane</keyword>
<keyword id="KW-1185">Reference proteome</keyword>
<keyword id="KW-0812">Transmembrane</keyword>
<keyword id="KW-1133">Transmembrane helix</keyword>
<gene>
    <name evidence="4" type="primary">STING7</name>
    <name evidence="6" type="ORF">AWC38_SpisGene6024</name>
</gene>
<evidence type="ECO:0000250" key="1">
    <source>
        <dbReference type="UniProtKB" id="Q86WV6"/>
    </source>
</evidence>
<evidence type="ECO:0000255" key="2"/>
<evidence type="ECO:0000269" key="3">
    <source>
    </source>
</evidence>
<evidence type="ECO:0000303" key="4">
    <source>
    </source>
</evidence>
<evidence type="ECO:0000305" key="5"/>
<evidence type="ECO:0000312" key="6">
    <source>
        <dbReference type="EMBL" id="PFX29186.1"/>
    </source>
</evidence>
<organism>
    <name type="scientific">Stylophora pistillata</name>
    <name type="common">Smooth cauliflower coral</name>
    <dbReference type="NCBI Taxonomy" id="50429"/>
    <lineage>
        <taxon>Eukaryota</taxon>
        <taxon>Metazoa</taxon>
        <taxon>Cnidaria</taxon>
        <taxon>Anthozoa</taxon>
        <taxon>Hexacorallia</taxon>
        <taxon>Scleractinia</taxon>
        <taxon>Astrocoeniina</taxon>
        <taxon>Pocilloporidae</taxon>
        <taxon>Stylophora</taxon>
    </lineage>
</organism>
<name>STNG7_STYPI</name>
<comment type="function">
    <text evidence="1 3">Facilitator of innate immune signaling that acts as a sensor of second messenger signals produced by cyclic GMP-AMP synthase-like receptors (cGLRs) and promotes the production of type I interferon (PubMed:37379839). Innate immune response is triggered in response to nucleotides from viruses and bacteria delivered to the cytoplasm (PubMed:37379839). Acts by binding cyclic dinucleotides: recognizes and binds a large variety of 2'-3'- and 3'-3' linked cyclic dinucleotides (2'-3'-cGAMP, 3'-3'-cGAMP, 2',3'-cUAMP, 3',3'-cUAMP and/or 3',3'-c-di-GMP) second messengers produced by cGLRs in response to nucleotides in the cytosol, such as double-stranded RNA (dsRNA) (PubMed:37379839). Upon binding to cyclic dinucleotides, oligomerizes and promotes the recruitment and subsequent activation of the transcription factor IRF3 to induce expression of type I interferon (By similarity).</text>
</comment>
<comment type="subcellular location">
    <subcellularLocation>
        <location evidence="2">Membrane</location>
        <topology evidence="2">Multi-pass membrane protein</topology>
    </subcellularLocation>
</comment>
<comment type="similarity">
    <text evidence="5">Belongs to the STING family.</text>
</comment>
<dbReference type="EMBL" id="LSMT01000069">
    <property type="protein sequence ID" value="PFX29186.1"/>
    <property type="molecule type" value="Genomic_DNA"/>
</dbReference>
<dbReference type="SMR" id="A0A2B4SII1"/>
<dbReference type="STRING" id="50429.A0A2B4SII1"/>
<dbReference type="EnsemblMetazoa" id="XM_022928902.1">
    <property type="protein sequence ID" value="XP_022784637.1"/>
    <property type="gene ID" value="LOC111325161"/>
</dbReference>
<dbReference type="EnsemblMetazoa" id="XM_022928903.1">
    <property type="protein sequence ID" value="XP_022784638.1"/>
    <property type="gene ID" value="LOC111325161"/>
</dbReference>
<dbReference type="OrthoDB" id="6053839at2759"/>
<dbReference type="Proteomes" id="UP000225706">
    <property type="component" value="Unassembled WGS sequence"/>
</dbReference>
<dbReference type="GO" id="GO:0005776">
    <property type="term" value="C:autophagosome"/>
    <property type="evidence" value="ECO:0007669"/>
    <property type="project" value="TreeGrafter"/>
</dbReference>
<dbReference type="GO" id="GO:0005789">
    <property type="term" value="C:endoplasmic reticulum membrane"/>
    <property type="evidence" value="ECO:0007669"/>
    <property type="project" value="TreeGrafter"/>
</dbReference>
<dbReference type="GO" id="GO:0061507">
    <property type="term" value="F:2',3'-cyclic GMP-AMP binding"/>
    <property type="evidence" value="ECO:0000314"/>
    <property type="project" value="UniProtKB"/>
</dbReference>
<dbReference type="GO" id="GO:0140703">
    <property type="term" value="F:3',3'-cyclic GMP-AMP binding"/>
    <property type="evidence" value="ECO:0000314"/>
    <property type="project" value="UniProtKB"/>
</dbReference>
<dbReference type="GO" id="GO:0035438">
    <property type="term" value="F:cyclic-di-GMP binding"/>
    <property type="evidence" value="ECO:0000314"/>
    <property type="project" value="UniProtKB"/>
</dbReference>
<dbReference type="GO" id="GO:0002218">
    <property type="term" value="P:activation of innate immune response"/>
    <property type="evidence" value="ECO:0007669"/>
    <property type="project" value="InterPro"/>
</dbReference>
<dbReference type="GO" id="GO:0000045">
    <property type="term" value="P:autophagosome assembly"/>
    <property type="evidence" value="ECO:0007669"/>
    <property type="project" value="TreeGrafter"/>
</dbReference>
<dbReference type="GO" id="GO:0045087">
    <property type="term" value="P:innate immune response"/>
    <property type="evidence" value="ECO:0007669"/>
    <property type="project" value="UniProtKB-KW"/>
</dbReference>
<dbReference type="GO" id="GO:0016239">
    <property type="term" value="P:positive regulation of macroautophagy"/>
    <property type="evidence" value="ECO:0007669"/>
    <property type="project" value="TreeGrafter"/>
</dbReference>
<dbReference type="GO" id="GO:0032481">
    <property type="term" value="P:positive regulation of type I interferon production"/>
    <property type="evidence" value="ECO:0007669"/>
    <property type="project" value="InterPro"/>
</dbReference>
<dbReference type="GO" id="GO:0061709">
    <property type="term" value="P:reticulophagy"/>
    <property type="evidence" value="ECO:0007669"/>
    <property type="project" value="TreeGrafter"/>
</dbReference>
<dbReference type="FunFam" id="1.20.5.5200:FF:000001">
    <property type="entry name" value="Stimulator of interferon genes protein"/>
    <property type="match status" value="1"/>
</dbReference>
<dbReference type="Gene3D" id="1.20.5.5200">
    <property type="match status" value="1"/>
</dbReference>
<dbReference type="Gene3D" id="3.40.50.12100">
    <property type="entry name" value="Stimulator of interferon genes protein"/>
    <property type="match status" value="1"/>
</dbReference>
<dbReference type="InterPro" id="IPR029158">
    <property type="entry name" value="STING"/>
</dbReference>
<dbReference type="InterPro" id="IPR038623">
    <property type="entry name" value="STING_C_sf"/>
</dbReference>
<dbReference type="InterPro" id="IPR055432">
    <property type="entry name" value="STING_LBD"/>
</dbReference>
<dbReference type="InterPro" id="IPR055434">
    <property type="entry name" value="STING_TM"/>
</dbReference>
<dbReference type="PANTHER" id="PTHR34339">
    <property type="entry name" value="STIMULATOR OF INTERFERON GENES PROTEIN"/>
    <property type="match status" value="1"/>
</dbReference>
<dbReference type="PANTHER" id="PTHR34339:SF1">
    <property type="entry name" value="STIMULATOR OF INTERFERON GENES PROTEIN"/>
    <property type="match status" value="1"/>
</dbReference>
<dbReference type="Pfam" id="PF15009">
    <property type="entry name" value="STING_LBD"/>
    <property type="match status" value="1"/>
</dbReference>
<dbReference type="Pfam" id="PF23417">
    <property type="entry name" value="STING_TM"/>
    <property type="match status" value="1"/>
</dbReference>
<accession>A0A2B4SII1</accession>